<accession>Q0T4H1</accession>
<gene>
    <name type="primary">folM</name>
    <name type="ordered locus">SFV_1621</name>
</gene>
<dbReference type="EC" id="1.5.1.50" evidence="1"/>
<dbReference type="EC" id="1.5.1.3" evidence="1"/>
<dbReference type="EMBL" id="CP000266">
    <property type="protein sequence ID" value="ABF03794.1"/>
    <property type="molecule type" value="Genomic_DNA"/>
</dbReference>
<dbReference type="RefSeq" id="WP_000520806.1">
    <property type="nucleotide sequence ID" value="NC_008258.1"/>
</dbReference>
<dbReference type="SMR" id="Q0T4H1"/>
<dbReference type="KEGG" id="sfv:SFV_1621"/>
<dbReference type="HOGENOM" id="CLU_010194_1_3_6"/>
<dbReference type="Proteomes" id="UP000000659">
    <property type="component" value="Chromosome"/>
</dbReference>
<dbReference type="GO" id="GO:0004146">
    <property type="term" value="F:dihydrofolate reductase activity"/>
    <property type="evidence" value="ECO:0007669"/>
    <property type="project" value="UniProtKB-EC"/>
</dbReference>
<dbReference type="GO" id="GO:0006730">
    <property type="term" value="P:one-carbon metabolic process"/>
    <property type="evidence" value="ECO:0007669"/>
    <property type="project" value="UniProtKB-KW"/>
</dbReference>
<dbReference type="CDD" id="cd05357">
    <property type="entry name" value="PR_SDR_c"/>
    <property type="match status" value="1"/>
</dbReference>
<dbReference type="FunFam" id="3.40.50.720:FF:000225">
    <property type="entry name" value="Dihydrofolate reductase FolM"/>
    <property type="match status" value="1"/>
</dbReference>
<dbReference type="Gene3D" id="3.40.50.720">
    <property type="entry name" value="NAD(P)-binding Rossmann-like Domain"/>
    <property type="match status" value="1"/>
</dbReference>
<dbReference type="InterPro" id="IPR036291">
    <property type="entry name" value="NAD(P)-bd_dom_sf"/>
</dbReference>
<dbReference type="InterPro" id="IPR020904">
    <property type="entry name" value="Sc_DH/Rdtase_CS"/>
</dbReference>
<dbReference type="InterPro" id="IPR002347">
    <property type="entry name" value="SDR_fam"/>
</dbReference>
<dbReference type="NCBIfam" id="NF005066">
    <property type="entry name" value="PRK06483.1"/>
    <property type="match status" value="1"/>
</dbReference>
<dbReference type="PANTHER" id="PTHR43639:SF6">
    <property type="entry name" value="DIHYDROMONAPTERIN REDUCTASE"/>
    <property type="match status" value="1"/>
</dbReference>
<dbReference type="PANTHER" id="PTHR43639">
    <property type="entry name" value="OXIDOREDUCTASE, SHORT-CHAIN DEHYDROGENASE/REDUCTASE FAMILY (AFU_ORTHOLOGUE AFUA_5G02870)"/>
    <property type="match status" value="1"/>
</dbReference>
<dbReference type="Pfam" id="PF13561">
    <property type="entry name" value="adh_short_C2"/>
    <property type="match status" value="1"/>
</dbReference>
<dbReference type="PRINTS" id="PR00081">
    <property type="entry name" value="GDHRDH"/>
</dbReference>
<dbReference type="SUPFAM" id="SSF51735">
    <property type="entry name" value="NAD(P)-binding Rossmann-fold domains"/>
    <property type="match status" value="1"/>
</dbReference>
<dbReference type="PROSITE" id="PS00061">
    <property type="entry name" value="ADH_SHORT"/>
    <property type="match status" value="1"/>
</dbReference>
<comment type="function">
    <text evidence="1">Catalyzes the reduction of dihydromonapterin to tetrahydromonapterin. Also has lower activity with dihydrofolate.</text>
</comment>
<comment type="catalytic activity">
    <reaction evidence="1">
        <text>(6S)-5,6,7,8-tetrahydrofolate + NADP(+) = 7,8-dihydrofolate + NADPH + H(+)</text>
        <dbReference type="Rhea" id="RHEA:15009"/>
        <dbReference type="ChEBI" id="CHEBI:15378"/>
        <dbReference type="ChEBI" id="CHEBI:57451"/>
        <dbReference type="ChEBI" id="CHEBI:57453"/>
        <dbReference type="ChEBI" id="CHEBI:57783"/>
        <dbReference type="ChEBI" id="CHEBI:58349"/>
        <dbReference type="EC" id="1.5.1.3"/>
    </reaction>
</comment>
<comment type="catalytic activity">
    <reaction evidence="1">
        <text>7,8-dihydromonapterin + NADPH + H(+) = 5,6,7,8-tetrahydromonapterin + NADP(+)</text>
        <dbReference type="Rhea" id="RHEA:34847"/>
        <dbReference type="ChEBI" id="CHEBI:15378"/>
        <dbReference type="ChEBI" id="CHEBI:57783"/>
        <dbReference type="ChEBI" id="CHEBI:58349"/>
        <dbReference type="ChEBI" id="CHEBI:71175"/>
        <dbReference type="ChEBI" id="CHEBI:71177"/>
        <dbReference type="EC" id="1.5.1.50"/>
    </reaction>
</comment>
<comment type="similarity">
    <text evidence="3">Belongs to the short-chain dehydrogenases/reductases (SDR) family. FolM subfamily.</text>
</comment>
<feature type="chain" id="PRO_0000339402" description="Dihydromonapterin reductase">
    <location>
        <begin position="1"/>
        <end position="240"/>
    </location>
</feature>
<feature type="active site" description="Proton acceptor" evidence="2">
    <location>
        <position position="152"/>
    </location>
</feature>
<protein>
    <recommendedName>
        <fullName>Dihydromonapterin reductase</fullName>
        <shortName>H(2)-MPt reductase</shortName>
        <ecNumber evidence="1">1.5.1.50</ecNumber>
    </recommendedName>
    <alternativeName>
        <fullName>Dihydrofolate reductase</fullName>
        <shortName>DHFR</shortName>
        <ecNumber evidence="1">1.5.1.3</ecNumber>
    </alternativeName>
</protein>
<organism>
    <name type="scientific">Shigella flexneri serotype 5b (strain 8401)</name>
    <dbReference type="NCBI Taxonomy" id="373384"/>
    <lineage>
        <taxon>Bacteria</taxon>
        <taxon>Pseudomonadati</taxon>
        <taxon>Pseudomonadota</taxon>
        <taxon>Gammaproteobacteria</taxon>
        <taxon>Enterobacterales</taxon>
        <taxon>Enterobacteriaceae</taxon>
        <taxon>Shigella</taxon>
    </lineage>
</organism>
<name>FOLM_SHIF8</name>
<sequence>MGKTQPLPILITGGGRRIGLALAWHFINQKQPVIVSYRTHYPAIDGLINAGAQCIQADFSTNDGVMAFADEVLKTTHGLRAILHNASAWIAEKPGAPLADVLACMMQIHVNTPYLLNHALERLLRGHGHAASDIIHFTDYVVERGSDKHVAYAASKAALDNMTRSFARKLAPEVKVNSIAPSLILFNEHDDAEYRQQALNKSLMKTAPGEKEVIDLVDYLLTSCFVTGRSFPLDGGRHLR</sequence>
<proteinExistence type="inferred from homology"/>
<evidence type="ECO:0000250" key="1">
    <source>
        <dbReference type="UniProtKB" id="P0AFS3"/>
    </source>
</evidence>
<evidence type="ECO:0000255" key="2">
    <source>
        <dbReference type="PROSITE-ProRule" id="PRU10001"/>
    </source>
</evidence>
<evidence type="ECO:0000305" key="3"/>
<keyword id="KW-0521">NADP</keyword>
<keyword id="KW-0554">One-carbon metabolism</keyword>
<keyword id="KW-0560">Oxidoreductase</keyword>
<reference key="1">
    <citation type="journal article" date="2006" name="BMC Genomics">
        <title>Complete genome sequence of Shigella flexneri 5b and comparison with Shigella flexneri 2a.</title>
        <authorList>
            <person name="Nie H."/>
            <person name="Yang F."/>
            <person name="Zhang X."/>
            <person name="Yang J."/>
            <person name="Chen L."/>
            <person name="Wang J."/>
            <person name="Xiong Z."/>
            <person name="Peng J."/>
            <person name="Sun L."/>
            <person name="Dong J."/>
            <person name="Xue Y."/>
            <person name="Xu X."/>
            <person name="Chen S."/>
            <person name="Yao Z."/>
            <person name="Shen Y."/>
            <person name="Jin Q."/>
        </authorList>
    </citation>
    <scope>NUCLEOTIDE SEQUENCE [LARGE SCALE GENOMIC DNA]</scope>
    <source>
        <strain>8401</strain>
    </source>
</reference>